<sequence length="200" mass="21898">MAAAWTVVLVTLVLGLAVAGPVPTSKPTTTGKGCHIGRFKSLSPQELASFKKARDALEESLKLKNWSCSSPVFPGNWDLRLLQVRERPVALEAELALTLKVLEAAAGPALEDVLDQPLHTLHHILSQLQACIQPQPTAGPRPRGRLHHWLHRLQEAPKKESAGCLEASVTFNLFRLLTRDLKYVADGNLCLRTSTHPEST</sequence>
<comment type="function">
    <text>Cytokine with antiviral, antitumour and immunomodulatory activities. Plays a critical role in the antiviral host defense, predominantly in the epithelial tissues. Acts as a ligand for the heterodimeric class II cytokine receptor composed of IL10RB and IFNLR1, and receptor engagement leads to the activation of the JAK/STAT signaling pathway resulting in the expression of IFN-stimulated genes (ISG), which mediate the antiviral state. Has a restricted receptor distribution and therefore restricted targets: is primarily active in epithelial cells and this cell type-selective action is because of the epithelial cell-specific expression of its receptor IFNLR1. Exerts an immunomodulatory effect by up-regulating MHC class I antigen expression.</text>
</comment>
<comment type="subcellular location">
    <subcellularLocation>
        <location>Secreted</location>
    </subcellularLocation>
</comment>
<comment type="induction">
    <text>By viral infections or double-stranded RNA.</text>
</comment>
<comment type="similarity">
    <text evidence="4">Belongs to the lambda interferon family.</text>
</comment>
<comment type="online information" name="Wikipedia">
    <link uri="https://en.wikipedia.org/wiki/Interleukin_29"/>
    <text>Interleukin-29 entry</text>
</comment>
<accession>Q8IU54</accession>
<accession>A0AV25</accession>
<accession>Q17R34</accession>
<feature type="signal peptide" evidence="1">
    <location>
        <begin position="1"/>
        <end position="19"/>
    </location>
</feature>
<feature type="chain" id="PRO_0000015511" description="Interferon lambda-1">
    <location>
        <begin position="20"/>
        <end position="200"/>
    </location>
</feature>
<feature type="glycosylation site" description="N-linked (GlcNAc...) asparagine" evidence="1">
    <location>
        <position position="65"/>
    </location>
</feature>
<feature type="disulfide bond" evidence="3">
    <location>
        <begin position="68"/>
        <end position="164"/>
    </location>
</feature>
<feature type="sequence variant" id="VAR_024506" description="In dbSNP:rs30461." evidence="2">
    <original>N</original>
    <variation>D</variation>
    <location>
        <position position="188"/>
    </location>
</feature>
<feature type="helix" evidence="5">
    <location>
        <begin position="44"/>
        <end position="61"/>
    </location>
</feature>
<feature type="helix" evidence="5">
    <location>
        <begin position="79"/>
        <end position="81"/>
    </location>
</feature>
<feature type="helix" evidence="5">
    <location>
        <begin position="84"/>
        <end position="86"/>
    </location>
</feature>
<feature type="helix" evidence="5">
    <location>
        <begin position="87"/>
        <end position="105"/>
    </location>
</feature>
<feature type="turn" evidence="5">
    <location>
        <begin position="108"/>
        <end position="110"/>
    </location>
</feature>
<feature type="helix" evidence="5">
    <location>
        <begin position="111"/>
        <end position="129"/>
    </location>
</feature>
<feature type="helix" evidence="5">
    <location>
        <begin position="145"/>
        <end position="159"/>
    </location>
</feature>
<feature type="helix" evidence="5">
    <location>
        <begin position="162"/>
        <end position="178"/>
    </location>
</feature>
<feature type="helix" evidence="5">
    <location>
        <begin position="180"/>
        <end position="186"/>
    </location>
</feature>
<reference key="1">
    <citation type="journal article" date="2003" name="Nat. Immunol.">
        <title>IL-28, IL-29 and their class II cytokine receptor IL-28R.</title>
        <authorList>
            <person name="Sheppard P."/>
            <person name="Kindsvogel W."/>
            <person name="Xu W."/>
            <person name="Henderson K."/>
            <person name="Schlutsmeyer S."/>
            <person name="Whitmore T.E."/>
            <person name="Kuestner R."/>
            <person name="Garrigues U."/>
            <person name="Birks C."/>
            <person name="Roraback J."/>
            <person name="Ostrander C."/>
            <person name="Dong D."/>
            <person name="Shin J."/>
            <person name="Presnell S."/>
            <person name="Fox B."/>
            <person name="Haldeman B."/>
            <person name="Cooper E."/>
            <person name="Taft D."/>
            <person name="Gilbert T."/>
            <person name="Grant F.J."/>
            <person name="Tackett M."/>
            <person name="Krivan W."/>
            <person name="McKnight G."/>
            <person name="Clegg C."/>
            <person name="Foster D."/>
            <person name="Klucher K.M."/>
        </authorList>
    </citation>
    <scope>NUCLEOTIDE SEQUENCE [MRNA]</scope>
</reference>
<reference key="2">
    <citation type="journal article" date="2003" name="Nat. Immunol.">
        <title>IFN-lambdas mediate antiviral protection through a distinct class II cytokine receptor complex.</title>
        <authorList>
            <person name="Kotenko S.V."/>
            <person name="Gallagher G."/>
            <person name="Baurin V.V."/>
            <person name="Lewis-Antes A."/>
            <person name="Shen M."/>
            <person name="Shah N.K."/>
            <person name="Langer J.A."/>
            <person name="Sheikh F."/>
            <person name="Dickensheets H."/>
            <person name="Donnelly R.P."/>
        </authorList>
    </citation>
    <scope>NUCLEOTIDE SEQUENCE [MRNA]</scope>
</reference>
<reference key="3">
    <citation type="submission" date="2003-07" db="EMBL/GenBank/DDBJ databases">
        <title>Construction of mammalian cell expression vector of human interleukin (IL)-28A, IL-28B and IL-29 gene from activated peripheral blood mononuclear cell and analysis of its sequence.</title>
        <authorList>
            <person name="Li M."/>
            <person name="He S."/>
        </authorList>
    </citation>
    <scope>NUCLEOTIDE SEQUENCE [MRNA]</scope>
</reference>
<reference key="4">
    <citation type="journal article" date="2004" name="Nature">
        <title>The DNA sequence and biology of human chromosome 19.</title>
        <authorList>
            <person name="Grimwood J."/>
            <person name="Gordon L.A."/>
            <person name="Olsen A.S."/>
            <person name="Terry A."/>
            <person name="Schmutz J."/>
            <person name="Lamerdin J.E."/>
            <person name="Hellsten U."/>
            <person name="Goodstein D."/>
            <person name="Couronne O."/>
            <person name="Tran-Gyamfi M."/>
            <person name="Aerts A."/>
            <person name="Altherr M."/>
            <person name="Ashworth L."/>
            <person name="Bajorek E."/>
            <person name="Black S."/>
            <person name="Branscomb E."/>
            <person name="Caenepeel S."/>
            <person name="Carrano A.V."/>
            <person name="Caoile C."/>
            <person name="Chan Y.M."/>
            <person name="Christensen M."/>
            <person name="Cleland C.A."/>
            <person name="Copeland A."/>
            <person name="Dalin E."/>
            <person name="Dehal P."/>
            <person name="Denys M."/>
            <person name="Detter J.C."/>
            <person name="Escobar J."/>
            <person name="Flowers D."/>
            <person name="Fotopulos D."/>
            <person name="Garcia C."/>
            <person name="Georgescu A.M."/>
            <person name="Glavina T."/>
            <person name="Gomez M."/>
            <person name="Gonzales E."/>
            <person name="Groza M."/>
            <person name="Hammon N."/>
            <person name="Hawkins T."/>
            <person name="Haydu L."/>
            <person name="Ho I."/>
            <person name="Huang W."/>
            <person name="Israni S."/>
            <person name="Jett J."/>
            <person name="Kadner K."/>
            <person name="Kimball H."/>
            <person name="Kobayashi A."/>
            <person name="Larionov V."/>
            <person name="Leem S.-H."/>
            <person name="Lopez F."/>
            <person name="Lou Y."/>
            <person name="Lowry S."/>
            <person name="Malfatti S."/>
            <person name="Martinez D."/>
            <person name="McCready P.M."/>
            <person name="Medina C."/>
            <person name="Morgan J."/>
            <person name="Nelson K."/>
            <person name="Nolan M."/>
            <person name="Ovcharenko I."/>
            <person name="Pitluck S."/>
            <person name="Pollard M."/>
            <person name="Popkie A.P."/>
            <person name="Predki P."/>
            <person name="Quan G."/>
            <person name="Ramirez L."/>
            <person name="Rash S."/>
            <person name="Retterer J."/>
            <person name="Rodriguez A."/>
            <person name="Rogers S."/>
            <person name="Salamov A."/>
            <person name="Salazar A."/>
            <person name="She X."/>
            <person name="Smith D."/>
            <person name="Slezak T."/>
            <person name="Solovyev V."/>
            <person name="Thayer N."/>
            <person name="Tice H."/>
            <person name="Tsai M."/>
            <person name="Ustaszewska A."/>
            <person name="Vo N."/>
            <person name="Wagner M."/>
            <person name="Wheeler J."/>
            <person name="Wu K."/>
            <person name="Xie G."/>
            <person name="Yang J."/>
            <person name="Dubchak I."/>
            <person name="Furey T.S."/>
            <person name="DeJong P."/>
            <person name="Dickson M."/>
            <person name="Gordon D."/>
            <person name="Eichler E.E."/>
            <person name="Pennacchio L.A."/>
            <person name="Richardson P."/>
            <person name="Stubbs L."/>
            <person name="Rokhsar D.S."/>
            <person name="Myers R.M."/>
            <person name="Rubin E.M."/>
            <person name="Lucas S.M."/>
        </authorList>
    </citation>
    <scope>NUCLEOTIDE SEQUENCE [LARGE SCALE GENOMIC DNA]</scope>
</reference>
<reference key="5">
    <citation type="journal article" date="2004" name="Genome Res.">
        <title>The status, quality, and expansion of the NIH full-length cDNA project: the Mammalian Gene Collection (MGC).</title>
        <authorList>
            <consortium name="The MGC Project Team"/>
        </authorList>
    </citation>
    <scope>NUCLEOTIDE SEQUENCE [LARGE SCALE MRNA]</scope>
    <scope>VARIANT ASP-188</scope>
</reference>
<reference key="6">
    <citation type="journal article" date="2010" name="J. Interferon Cytokine Res.">
        <title>Interferon-lambda: a new addition to an old family.</title>
        <authorList>
            <person name="Donnelly R.P."/>
            <person name="Kotenko S.V."/>
        </authorList>
    </citation>
    <scope>REVIEW</scope>
</reference>
<reference key="7">
    <citation type="journal article" date="2014" name="J. Innate Immun.">
        <title>Interferon-lambda in the context of viral infections: production, response and therapeutic implications.</title>
        <authorList>
            <person name="Hermant P."/>
            <person name="Michiels T."/>
        </authorList>
    </citation>
    <scope>REVIEW</scope>
</reference>
<reference key="8">
    <citation type="journal article" date="2010" name="J. Mol. Biol.">
        <title>Crystal structure of human interferon-lambda1 in complex with its high-affinity receptor interferon-lambdaR1.</title>
        <authorList>
            <person name="Miknis Z.J."/>
            <person name="Magracheva E."/>
            <person name="Li W."/>
            <person name="Zdanov A."/>
            <person name="Kotenko S.V."/>
            <person name="Wlodawer A."/>
        </authorList>
    </citation>
    <scope>X-RAY CRYSTALLOGRAPHY (2.1 ANGSTROMS) OF 21-200 IN COMPLEX WITH IFNLR1</scope>
    <scope>DISULFIDE BOND</scope>
</reference>
<evidence type="ECO:0000255" key="1"/>
<evidence type="ECO:0000269" key="2">
    <source>
    </source>
</evidence>
<evidence type="ECO:0000269" key="3">
    <source>
    </source>
</evidence>
<evidence type="ECO:0000305" key="4"/>
<evidence type="ECO:0007829" key="5">
    <source>
        <dbReference type="PDB" id="3OG6"/>
    </source>
</evidence>
<keyword id="KW-0002">3D-structure</keyword>
<keyword id="KW-0051">Antiviral defense</keyword>
<keyword id="KW-0202">Cytokine</keyword>
<keyword id="KW-1015">Disulfide bond</keyword>
<keyword id="KW-0325">Glycoprotein</keyword>
<keyword id="KW-1267">Proteomics identification</keyword>
<keyword id="KW-1185">Reference proteome</keyword>
<keyword id="KW-0964">Secreted</keyword>
<keyword id="KW-0732">Signal</keyword>
<protein>
    <recommendedName>
        <fullName>Interferon lambda-1</fullName>
        <shortName>IFN-lambda-1</shortName>
    </recommendedName>
    <alternativeName>
        <fullName>Cytokine Zcyto21</fullName>
    </alternativeName>
    <alternativeName>
        <fullName>Interleukin-29</fullName>
        <shortName>IL-29</shortName>
    </alternativeName>
</protein>
<gene>
    <name type="primary">IFNL1</name>
    <name type="synonym">IL29</name>
    <name type="synonym">ZCYTO21</name>
</gene>
<organism>
    <name type="scientific">Homo sapiens</name>
    <name type="common">Human</name>
    <dbReference type="NCBI Taxonomy" id="9606"/>
    <lineage>
        <taxon>Eukaryota</taxon>
        <taxon>Metazoa</taxon>
        <taxon>Chordata</taxon>
        <taxon>Craniata</taxon>
        <taxon>Vertebrata</taxon>
        <taxon>Euteleostomi</taxon>
        <taxon>Mammalia</taxon>
        <taxon>Eutheria</taxon>
        <taxon>Euarchontoglires</taxon>
        <taxon>Primates</taxon>
        <taxon>Haplorrhini</taxon>
        <taxon>Catarrhini</taxon>
        <taxon>Hominidae</taxon>
        <taxon>Homo</taxon>
    </lineage>
</organism>
<dbReference type="EMBL" id="AY129150">
    <property type="protein sequence ID" value="AAN28265.1"/>
    <property type="molecule type" value="mRNA"/>
</dbReference>
<dbReference type="EMBL" id="AY184372">
    <property type="protein sequence ID" value="AAN86125.1"/>
    <property type="molecule type" value="mRNA"/>
</dbReference>
<dbReference type="EMBL" id="AY336716">
    <property type="protein sequence ID" value="AAR24511.1"/>
    <property type="molecule type" value="mRNA"/>
</dbReference>
<dbReference type="EMBL" id="AC011445">
    <property type="status" value="NOT_ANNOTATED_CDS"/>
    <property type="molecule type" value="Genomic_DNA"/>
</dbReference>
<dbReference type="EMBL" id="BC074985">
    <property type="protein sequence ID" value="AAH74985.1"/>
    <property type="molecule type" value="mRNA"/>
</dbReference>
<dbReference type="EMBL" id="BC126183">
    <property type="protein sequence ID" value="AAI26184.1"/>
    <property type="molecule type" value="mRNA"/>
</dbReference>
<dbReference type="EMBL" id="BC117482">
    <property type="protein sequence ID" value="AAI17483.1"/>
    <property type="molecule type" value="mRNA"/>
</dbReference>
<dbReference type="CCDS" id="CCDS12531.1"/>
<dbReference type="RefSeq" id="NP_742152.1">
    <property type="nucleotide sequence ID" value="NM_172140.2"/>
</dbReference>
<dbReference type="PDB" id="3OG4">
    <property type="method" value="X-ray"/>
    <property type="resolution" value="2.16 A"/>
    <property type="chains" value="A=23-200"/>
</dbReference>
<dbReference type="PDB" id="3OG6">
    <property type="method" value="X-ray"/>
    <property type="resolution" value="2.10 A"/>
    <property type="chains" value="A=20-200"/>
</dbReference>
<dbReference type="PDBsum" id="3OG4"/>
<dbReference type="PDBsum" id="3OG6"/>
<dbReference type="SMR" id="Q8IU54"/>
<dbReference type="BioGRID" id="129396">
    <property type="interactions" value="10"/>
</dbReference>
<dbReference type="ComplexPortal" id="CPX-6011">
    <property type="entry name" value="Interferon lambda receptor-ligand complex, IFNL1 variant"/>
</dbReference>
<dbReference type="CORUM" id="Q8IU54"/>
<dbReference type="FunCoup" id="Q8IU54">
    <property type="interactions" value="358"/>
</dbReference>
<dbReference type="IntAct" id="Q8IU54">
    <property type="interactions" value="6"/>
</dbReference>
<dbReference type="STRING" id="9606.ENSP00000329991"/>
<dbReference type="GlyCosmos" id="Q8IU54">
    <property type="glycosylation" value="1 site, No reported glycans"/>
</dbReference>
<dbReference type="GlyGen" id="Q8IU54">
    <property type="glycosylation" value="2 sites"/>
</dbReference>
<dbReference type="iPTMnet" id="Q8IU54"/>
<dbReference type="PhosphoSitePlus" id="Q8IU54"/>
<dbReference type="BioMuta" id="IFNL1"/>
<dbReference type="MassIVE" id="Q8IU54"/>
<dbReference type="PaxDb" id="9606-ENSP00000329991"/>
<dbReference type="PeptideAtlas" id="Q8IU54"/>
<dbReference type="ProteomicsDB" id="70504"/>
<dbReference type="Antibodypedia" id="30288">
    <property type="antibodies" value="297 antibodies from 29 providers"/>
</dbReference>
<dbReference type="DNASU" id="282618"/>
<dbReference type="Ensembl" id="ENST00000333625.3">
    <property type="protein sequence ID" value="ENSP00000329991.1"/>
    <property type="gene ID" value="ENSG00000182393.3"/>
</dbReference>
<dbReference type="Ensembl" id="ENST00000709027.1">
    <property type="protein sequence ID" value="ENSP00000517467.1"/>
    <property type="gene ID" value="ENSG00000291872.1"/>
</dbReference>
<dbReference type="GeneID" id="282618"/>
<dbReference type="KEGG" id="hsa:282618"/>
<dbReference type="MANE-Select" id="ENST00000333625.3">
    <property type="protein sequence ID" value="ENSP00000329991.1"/>
    <property type="RefSeq nucleotide sequence ID" value="NM_172140.2"/>
    <property type="RefSeq protein sequence ID" value="NP_742152.1"/>
</dbReference>
<dbReference type="UCSC" id="uc002okv.4">
    <property type="organism name" value="human"/>
</dbReference>
<dbReference type="AGR" id="HGNC:18363"/>
<dbReference type="CTD" id="282618"/>
<dbReference type="DisGeNET" id="282618"/>
<dbReference type="GeneCards" id="IFNL1"/>
<dbReference type="HGNC" id="HGNC:18363">
    <property type="gene designation" value="IFNL1"/>
</dbReference>
<dbReference type="HPA" id="ENSG00000182393">
    <property type="expression patterns" value="Not detected"/>
</dbReference>
<dbReference type="MIM" id="607403">
    <property type="type" value="gene"/>
</dbReference>
<dbReference type="neXtProt" id="NX_Q8IU54"/>
<dbReference type="OpenTargets" id="ENSG00000182393"/>
<dbReference type="PharmGKB" id="PA134899000"/>
<dbReference type="VEuPathDB" id="HostDB:ENSG00000182393"/>
<dbReference type="eggNOG" id="ENOG502SSDC">
    <property type="taxonomic scope" value="Eukaryota"/>
</dbReference>
<dbReference type="GeneTree" id="ENSGT00390000014310"/>
<dbReference type="HOGENOM" id="CLU_120266_0_0_1"/>
<dbReference type="InParanoid" id="Q8IU54"/>
<dbReference type="OMA" id="TTTWKGC"/>
<dbReference type="OrthoDB" id="9897984at2759"/>
<dbReference type="PAN-GO" id="Q8IU54">
    <property type="GO annotations" value="4 GO annotations based on evolutionary models"/>
</dbReference>
<dbReference type="PhylomeDB" id="Q8IU54"/>
<dbReference type="TreeFam" id="TF336172"/>
<dbReference type="PathwayCommons" id="Q8IU54"/>
<dbReference type="Reactome" id="R-HSA-449836">
    <property type="pathway name" value="Other interleukin signaling"/>
</dbReference>
<dbReference type="Reactome" id="R-HSA-8854691">
    <property type="pathway name" value="Interleukin-20 family signaling"/>
</dbReference>
<dbReference type="SignaLink" id="Q8IU54"/>
<dbReference type="SIGNOR" id="Q8IU54"/>
<dbReference type="BioGRID-ORCS" id="282618">
    <property type="hits" value="15 hits in 1141 CRISPR screens"/>
</dbReference>
<dbReference type="EvolutionaryTrace" id="Q8IU54"/>
<dbReference type="GeneWiki" id="Interleukin_29"/>
<dbReference type="GenomeRNAi" id="282618"/>
<dbReference type="Pharos" id="Q8IU54">
    <property type="development level" value="Tbio"/>
</dbReference>
<dbReference type="PRO" id="PR:Q8IU54"/>
<dbReference type="Proteomes" id="UP000005640">
    <property type="component" value="Chromosome 19"/>
</dbReference>
<dbReference type="RNAct" id="Q8IU54">
    <property type="molecule type" value="protein"/>
</dbReference>
<dbReference type="Bgee" id="ENSG00000182393">
    <property type="expression patterns" value="Expressed in male germ line stem cell (sensu Vertebrata) in testis and 14 other cell types or tissues"/>
</dbReference>
<dbReference type="GO" id="GO:0005576">
    <property type="term" value="C:extracellular region"/>
    <property type="evidence" value="ECO:0000314"/>
    <property type="project" value="UniProtKB"/>
</dbReference>
<dbReference type="GO" id="GO:0005615">
    <property type="term" value="C:extracellular space"/>
    <property type="evidence" value="ECO:0000318"/>
    <property type="project" value="GO_Central"/>
</dbReference>
<dbReference type="GO" id="GO:0032002">
    <property type="term" value="C:interleukin-28 receptor complex"/>
    <property type="evidence" value="ECO:0000314"/>
    <property type="project" value="UniProtKB"/>
</dbReference>
<dbReference type="GO" id="GO:0005125">
    <property type="term" value="F:cytokine activity"/>
    <property type="evidence" value="ECO:0007669"/>
    <property type="project" value="UniProtKB-KW"/>
</dbReference>
<dbReference type="GO" id="GO:0032003">
    <property type="term" value="F:interleukin-28 receptor binding"/>
    <property type="evidence" value="ECO:0000353"/>
    <property type="project" value="UniProtKB"/>
</dbReference>
<dbReference type="GO" id="GO:0005102">
    <property type="term" value="F:signaling receptor binding"/>
    <property type="evidence" value="ECO:0000314"/>
    <property type="project" value="UniProtKB"/>
</dbReference>
<dbReference type="GO" id="GO:0007259">
    <property type="term" value="P:cell surface receptor signaling pathway via JAK-STAT"/>
    <property type="evidence" value="ECO:0007669"/>
    <property type="project" value="InterPro"/>
</dbReference>
<dbReference type="GO" id="GO:0098586">
    <property type="term" value="P:cellular response to virus"/>
    <property type="evidence" value="ECO:0000303"/>
    <property type="project" value="ComplexPortal"/>
</dbReference>
<dbReference type="GO" id="GO:0051607">
    <property type="term" value="P:defense response to virus"/>
    <property type="evidence" value="ECO:0000314"/>
    <property type="project" value="UniProtKB"/>
</dbReference>
<dbReference type="GO" id="GO:0045087">
    <property type="term" value="P:innate immune response"/>
    <property type="evidence" value="ECO:0000318"/>
    <property type="project" value="GO_Central"/>
</dbReference>
<dbReference type="GO" id="GO:0008285">
    <property type="term" value="P:negative regulation of cell population proliferation"/>
    <property type="evidence" value="ECO:0000314"/>
    <property type="project" value="UniProtKB"/>
</dbReference>
<dbReference type="GO" id="GO:0045892">
    <property type="term" value="P:negative regulation of DNA-templated transcription"/>
    <property type="evidence" value="ECO:0000314"/>
    <property type="project" value="UniProtKB"/>
</dbReference>
<dbReference type="GO" id="GO:0032696">
    <property type="term" value="P:negative regulation of interleukin-13 production"/>
    <property type="evidence" value="ECO:0000314"/>
    <property type="project" value="UniProtKB"/>
</dbReference>
<dbReference type="GO" id="GO:0032714">
    <property type="term" value="P:negative regulation of interleukin-5 production"/>
    <property type="evidence" value="ECO:0000314"/>
    <property type="project" value="UniProtKB"/>
</dbReference>
<dbReference type="GO" id="GO:0043381">
    <property type="term" value="P:negative regulation of memory T cell differentiation"/>
    <property type="evidence" value="ECO:0000314"/>
    <property type="project" value="UniProtKB"/>
</dbReference>
<dbReference type="GO" id="GO:0045581">
    <property type="term" value="P:negative regulation of T cell differentiation"/>
    <property type="evidence" value="ECO:0000314"/>
    <property type="project" value="UniProtKB"/>
</dbReference>
<dbReference type="GO" id="GO:0002829">
    <property type="term" value="P:negative regulation of type 2 immune response"/>
    <property type="evidence" value="ECO:0000314"/>
    <property type="project" value="UniProtKB"/>
</dbReference>
<dbReference type="GO" id="GO:0045893">
    <property type="term" value="P:positive regulation of DNA-templated transcription"/>
    <property type="evidence" value="ECO:0000314"/>
    <property type="project" value="UniProtKB"/>
</dbReference>
<dbReference type="GO" id="GO:0050778">
    <property type="term" value="P:positive regulation of immune response"/>
    <property type="evidence" value="ECO:0000304"/>
    <property type="project" value="UniProtKB"/>
</dbReference>
<dbReference type="GO" id="GO:0045345">
    <property type="term" value="P:positive regulation of MHC class I biosynthetic process"/>
    <property type="evidence" value="ECO:0000314"/>
    <property type="project" value="UniProtKB"/>
</dbReference>
<dbReference type="GO" id="GO:0046427">
    <property type="term" value="P:positive regulation of receptor signaling pathway via JAK-STAT"/>
    <property type="evidence" value="ECO:0000314"/>
    <property type="project" value="UniProtKB"/>
</dbReference>
<dbReference type="GO" id="GO:0032729">
    <property type="term" value="P:positive regulation of type II interferon production"/>
    <property type="evidence" value="ECO:0000314"/>
    <property type="project" value="UniProtKB"/>
</dbReference>
<dbReference type="GO" id="GO:0042531">
    <property type="term" value="P:positive regulation of tyrosine phosphorylation of STAT protein"/>
    <property type="evidence" value="ECO:0000314"/>
    <property type="project" value="UniProtKB"/>
</dbReference>
<dbReference type="GO" id="GO:0038196">
    <property type="term" value="P:type III interferon-mediated signaling pathway"/>
    <property type="evidence" value="ECO:0000303"/>
    <property type="project" value="ComplexPortal"/>
</dbReference>
<dbReference type="FunFam" id="1.20.1250.60:FF:000001">
    <property type="entry name" value="Interferon lambda 1"/>
    <property type="match status" value="1"/>
</dbReference>
<dbReference type="Gene3D" id="1.20.1250.60">
    <property type="entry name" value="Interferon lambda"/>
    <property type="match status" value="1"/>
</dbReference>
<dbReference type="InterPro" id="IPR038326">
    <property type="entry name" value="IFN-lambda_sf"/>
</dbReference>
<dbReference type="InterPro" id="IPR029177">
    <property type="entry name" value="INF_lambda"/>
</dbReference>
<dbReference type="PANTHER" id="PTHR31943:SF14">
    <property type="entry name" value="INTERFERON LAMBDA-1"/>
    <property type="match status" value="1"/>
</dbReference>
<dbReference type="PANTHER" id="PTHR31943">
    <property type="entry name" value="INTERLEUKIN-28 AND 29"/>
    <property type="match status" value="1"/>
</dbReference>
<dbReference type="Pfam" id="PF15177">
    <property type="entry name" value="IL28A"/>
    <property type="match status" value="1"/>
</dbReference>
<proteinExistence type="evidence at protein level"/>
<name>IFNL1_HUMAN</name>